<proteinExistence type="inferred from homology"/>
<gene>
    <name evidence="1" type="primary">ileS</name>
    <name type="ordered locus">lhv_0863</name>
</gene>
<keyword id="KW-0030">Aminoacyl-tRNA synthetase</keyword>
<keyword id="KW-0067">ATP-binding</keyword>
<keyword id="KW-0963">Cytoplasm</keyword>
<keyword id="KW-0436">Ligase</keyword>
<keyword id="KW-0479">Metal-binding</keyword>
<keyword id="KW-0547">Nucleotide-binding</keyword>
<keyword id="KW-0648">Protein biosynthesis</keyword>
<keyword id="KW-0862">Zinc</keyword>
<sequence length="927" mass="106225">MKIKDTLNLGKTKFKMRGNLPVREAEWQKQWRENKLYEQRLKLNEGKPRFDLHDGPPFANGNIHMGHALNKISKDIIVRYKNMNGYYAPYVPGWDTHGLPVEQQLAKKGVDRKTMDRAKYRELCRQYAEEQVQKQMTDFKRLGVMADWDHPYITLQHDFEAQEIRVFGEMFKKGYIYKGKKPVYWSWSSESTLAEAEVEYKDVEANSIFVAFPVTDGKGIIDPKDTYFVIWTTTPWTIPANEAICVNPKFDYSVVQVGDKRYVVASGLLDKVAEEIGWDDYKVVQTVKGADMEYMKAKHPIYDKESLVIEGFHVTLDDGTGLVHTAPGFGEDDFNVGQRYNLPIFSPVDAHGCYTDEVPELKGMFYQDVDKLMVQKLKDAGALLKLKIFTHSYPHDWRTKKPVIFRATTQWFASIAPFRDQILDQIEKASFIPSWGKTRLYNMIKDRGDWVISRQRAWGVPLPIFYAEDGTPIVTPETIEHIAKIFEKEGSNAWYTHTAKELLPEGFTSEHSPNGEFTKEKDILDVWFDSGSSWSGVMEKRDGLHYPADLYLEGSDQYRGWFNSSLITSVAVTGQAPYKQVLSQGFVLDDKGHKMSKSLGNVISPNDVIKKMGAEIIRLWVAQADTTSDVAVSMGILQQSAESYRKIRNTFRYMLANTSDFDPKENRVAYDDLRSVDQYMEVKLNDLIKECLAAYDKFDFTTVFKKVFNFISNDLSAFYLDFAKDVLYIEVENSHARRSMQTVIYDAAVKLAKILTPILPHTMEEIWGFLKEDEDYVQLANMPEVENYANHDELLENWAKFMKLRDDVLKALEDARNKKLIGKSFEAAVTIYPDKETKAMLDELDADFREILIVSKLTISDDEAPVDAEQLANAAVVVKHAEGEVCPRCRMIRTDIGADPKLPMLCGRCAEIVEANYPEVVQEGLEK</sequence>
<evidence type="ECO:0000255" key="1">
    <source>
        <dbReference type="HAMAP-Rule" id="MF_02002"/>
    </source>
</evidence>
<accession>A8YUP7</accession>
<organism>
    <name type="scientific">Lactobacillus helveticus (strain DPC 4571)</name>
    <dbReference type="NCBI Taxonomy" id="405566"/>
    <lineage>
        <taxon>Bacteria</taxon>
        <taxon>Bacillati</taxon>
        <taxon>Bacillota</taxon>
        <taxon>Bacilli</taxon>
        <taxon>Lactobacillales</taxon>
        <taxon>Lactobacillaceae</taxon>
        <taxon>Lactobacillus</taxon>
    </lineage>
</organism>
<dbReference type="EC" id="6.1.1.5" evidence="1"/>
<dbReference type="EMBL" id="CP000517">
    <property type="protein sequence ID" value="ABX26985.1"/>
    <property type="molecule type" value="Genomic_DNA"/>
</dbReference>
<dbReference type="RefSeq" id="WP_012211704.1">
    <property type="nucleotide sequence ID" value="NC_010080.1"/>
</dbReference>
<dbReference type="SMR" id="A8YUP7"/>
<dbReference type="KEGG" id="lhe:lhv_0863"/>
<dbReference type="eggNOG" id="COG0060">
    <property type="taxonomic scope" value="Bacteria"/>
</dbReference>
<dbReference type="HOGENOM" id="CLU_001493_7_1_9"/>
<dbReference type="Proteomes" id="UP000000790">
    <property type="component" value="Chromosome"/>
</dbReference>
<dbReference type="GO" id="GO:0005829">
    <property type="term" value="C:cytosol"/>
    <property type="evidence" value="ECO:0007669"/>
    <property type="project" value="TreeGrafter"/>
</dbReference>
<dbReference type="GO" id="GO:0002161">
    <property type="term" value="F:aminoacyl-tRNA deacylase activity"/>
    <property type="evidence" value="ECO:0007669"/>
    <property type="project" value="InterPro"/>
</dbReference>
<dbReference type="GO" id="GO:0005524">
    <property type="term" value="F:ATP binding"/>
    <property type="evidence" value="ECO:0007669"/>
    <property type="project" value="UniProtKB-UniRule"/>
</dbReference>
<dbReference type="GO" id="GO:0004822">
    <property type="term" value="F:isoleucine-tRNA ligase activity"/>
    <property type="evidence" value="ECO:0007669"/>
    <property type="project" value="UniProtKB-UniRule"/>
</dbReference>
<dbReference type="GO" id="GO:0000049">
    <property type="term" value="F:tRNA binding"/>
    <property type="evidence" value="ECO:0007669"/>
    <property type="project" value="InterPro"/>
</dbReference>
<dbReference type="GO" id="GO:0008270">
    <property type="term" value="F:zinc ion binding"/>
    <property type="evidence" value="ECO:0007669"/>
    <property type="project" value="UniProtKB-UniRule"/>
</dbReference>
<dbReference type="GO" id="GO:0006428">
    <property type="term" value="P:isoleucyl-tRNA aminoacylation"/>
    <property type="evidence" value="ECO:0007669"/>
    <property type="project" value="UniProtKB-UniRule"/>
</dbReference>
<dbReference type="CDD" id="cd07960">
    <property type="entry name" value="Anticodon_Ia_Ile_BEm"/>
    <property type="match status" value="1"/>
</dbReference>
<dbReference type="CDD" id="cd00818">
    <property type="entry name" value="IleRS_core"/>
    <property type="match status" value="1"/>
</dbReference>
<dbReference type="FunFam" id="1.10.10.830:FF:000001">
    <property type="entry name" value="Isoleucine--tRNA ligase"/>
    <property type="match status" value="1"/>
</dbReference>
<dbReference type="FunFam" id="1.10.730.20:FF:000001">
    <property type="entry name" value="Isoleucine--tRNA ligase"/>
    <property type="match status" value="1"/>
</dbReference>
<dbReference type="FunFam" id="3.40.50.620:FF:000152">
    <property type="entry name" value="Isoleucine--tRNA ligase"/>
    <property type="match status" value="1"/>
</dbReference>
<dbReference type="FunFam" id="3.90.740.10:FF:000006">
    <property type="entry name" value="Isoleucine--tRNA ligase"/>
    <property type="match status" value="1"/>
</dbReference>
<dbReference type="Gene3D" id="1.10.730.20">
    <property type="match status" value="1"/>
</dbReference>
<dbReference type="Gene3D" id="3.40.50.620">
    <property type="entry name" value="HUPs"/>
    <property type="match status" value="2"/>
</dbReference>
<dbReference type="Gene3D" id="1.10.10.830">
    <property type="entry name" value="Ile-tRNA synthetase CP2 domain-like"/>
    <property type="match status" value="1"/>
</dbReference>
<dbReference type="HAMAP" id="MF_02002">
    <property type="entry name" value="Ile_tRNA_synth_type1"/>
    <property type="match status" value="1"/>
</dbReference>
<dbReference type="InterPro" id="IPR001412">
    <property type="entry name" value="aa-tRNA-synth_I_CS"/>
</dbReference>
<dbReference type="InterPro" id="IPR002300">
    <property type="entry name" value="aa-tRNA-synth_Ia"/>
</dbReference>
<dbReference type="InterPro" id="IPR033708">
    <property type="entry name" value="Anticodon_Ile_BEm"/>
</dbReference>
<dbReference type="InterPro" id="IPR002301">
    <property type="entry name" value="Ile-tRNA-ligase"/>
</dbReference>
<dbReference type="InterPro" id="IPR023585">
    <property type="entry name" value="Ile-tRNA-ligase_type1"/>
</dbReference>
<dbReference type="InterPro" id="IPR050081">
    <property type="entry name" value="Ile-tRNA_ligase"/>
</dbReference>
<dbReference type="InterPro" id="IPR013155">
    <property type="entry name" value="M/V/L/I-tRNA-synth_anticd-bd"/>
</dbReference>
<dbReference type="InterPro" id="IPR014729">
    <property type="entry name" value="Rossmann-like_a/b/a_fold"/>
</dbReference>
<dbReference type="InterPro" id="IPR009080">
    <property type="entry name" value="tRNAsynth_Ia_anticodon-bd"/>
</dbReference>
<dbReference type="InterPro" id="IPR009008">
    <property type="entry name" value="Val/Leu/Ile-tRNA-synth_edit"/>
</dbReference>
<dbReference type="InterPro" id="IPR010663">
    <property type="entry name" value="Znf_FPG/IleRS"/>
</dbReference>
<dbReference type="NCBIfam" id="TIGR00392">
    <property type="entry name" value="ileS"/>
    <property type="match status" value="1"/>
</dbReference>
<dbReference type="PANTHER" id="PTHR42765:SF1">
    <property type="entry name" value="ISOLEUCINE--TRNA LIGASE, MITOCHONDRIAL"/>
    <property type="match status" value="1"/>
</dbReference>
<dbReference type="PANTHER" id="PTHR42765">
    <property type="entry name" value="SOLEUCYL-TRNA SYNTHETASE"/>
    <property type="match status" value="1"/>
</dbReference>
<dbReference type="Pfam" id="PF08264">
    <property type="entry name" value="Anticodon_1"/>
    <property type="match status" value="1"/>
</dbReference>
<dbReference type="Pfam" id="PF00133">
    <property type="entry name" value="tRNA-synt_1"/>
    <property type="match status" value="1"/>
</dbReference>
<dbReference type="Pfam" id="PF06827">
    <property type="entry name" value="zf-FPG_IleRS"/>
    <property type="match status" value="1"/>
</dbReference>
<dbReference type="PRINTS" id="PR00984">
    <property type="entry name" value="TRNASYNTHILE"/>
</dbReference>
<dbReference type="SUPFAM" id="SSF47323">
    <property type="entry name" value="Anticodon-binding domain of a subclass of class I aminoacyl-tRNA synthetases"/>
    <property type="match status" value="1"/>
</dbReference>
<dbReference type="SUPFAM" id="SSF52374">
    <property type="entry name" value="Nucleotidylyl transferase"/>
    <property type="match status" value="1"/>
</dbReference>
<dbReference type="SUPFAM" id="SSF50677">
    <property type="entry name" value="ValRS/IleRS/LeuRS editing domain"/>
    <property type="match status" value="1"/>
</dbReference>
<dbReference type="PROSITE" id="PS00178">
    <property type="entry name" value="AA_TRNA_LIGASE_I"/>
    <property type="match status" value="1"/>
</dbReference>
<protein>
    <recommendedName>
        <fullName evidence="1">Isoleucine--tRNA ligase</fullName>
        <ecNumber evidence="1">6.1.1.5</ecNumber>
    </recommendedName>
    <alternativeName>
        <fullName evidence="1">Isoleucyl-tRNA synthetase</fullName>
        <shortName evidence="1">IleRS</shortName>
    </alternativeName>
</protein>
<feature type="chain" id="PRO_1000073710" description="Isoleucine--tRNA ligase">
    <location>
        <begin position="1"/>
        <end position="927"/>
    </location>
</feature>
<feature type="short sequence motif" description="'HIGH' region">
    <location>
        <begin position="57"/>
        <end position="67"/>
    </location>
</feature>
<feature type="short sequence motif" description="'KMSKS' region">
    <location>
        <begin position="594"/>
        <end position="598"/>
    </location>
</feature>
<feature type="binding site" evidence="1">
    <location>
        <position position="553"/>
    </location>
    <ligand>
        <name>L-isoleucyl-5'-AMP</name>
        <dbReference type="ChEBI" id="CHEBI:178002"/>
    </ligand>
</feature>
<feature type="binding site" evidence="1">
    <location>
        <position position="597"/>
    </location>
    <ligand>
        <name>ATP</name>
        <dbReference type="ChEBI" id="CHEBI:30616"/>
    </ligand>
</feature>
<feature type="binding site" evidence="1">
    <location>
        <position position="886"/>
    </location>
    <ligand>
        <name>Zn(2+)</name>
        <dbReference type="ChEBI" id="CHEBI:29105"/>
    </ligand>
</feature>
<feature type="binding site" evidence="1">
    <location>
        <position position="889"/>
    </location>
    <ligand>
        <name>Zn(2+)</name>
        <dbReference type="ChEBI" id="CHEBI:29105"/>
    </ligand>
</feature>
<feature type="binding site" evidence="1">
    <location>
        <position position="906"/>
    </location>
    <ligand>
        <name>Zn(2+)</name>
        <dbReference type="ChEBI" id="CHEBI:29105"/>
    </ligand>
</feature>
<feature type="binding site" evidence="1">
    <location>
        <position position="909"/>
    </location>
    <ligand>
        <name>Zn(2+)</name>
        <dbReference type="ChEBI" id="CHEBI:29105"/>
    </ligand>
</feature>
<reference key="1">
    <citation type="journal article" date="2008" name="J. Bacteriol.">
        <title>Genome sequence of Lactobacillus helveticus: an organism distinguished by selective gene loss and IS element expansion.</title>
        <authorList>
            <person name="Callanan M."/>
            <person name="Kaleta P."/>
            <person name="O'Callaghan J."/>
            <person name="O'Sullivan O."/>
            <person name="Jordan K."/>
            <person name="McAuliffe O."/>
            <person name="Sangrador-Vegas A."/>
            <person name="Slattery L."/>
            <person name="Fitzgerald G.F."/>
            <person name="Beresford T."/>
            <person name="Ross R.P."/>
        </authorList>
    </citation>
    <scope>NUCLEOTIDE SEQUENCE [LARGE SCALE GENOMIC DNA]</scope>
    <source>
        <strain>DPC 4571</strain>
    </source>
</reference>
<comment type="function">
    <text evidence="1">Catalyzes the attachment of isoleucine to tRNA(Ile). As IleRS can inadvertently accommodate and process structurally similar amino acids such as valine, to avoid such errors it has two additional distinct tRNA(Ile)-dependent editing activities. One activity is designated as 'pretransfer' editing and involves the hydrolysis of activated Val-AMP. The other activity is designated 'posttransfer' editing and involves deacylation of mischarged Val-tRNA(Ile).</text>
</comment>
<comment type="catalytic activity">
    <reaction evidence="1">
        <text>tRNA(Ile) + L-isoleucine + ATP = L-isoleucyl-tRNA(Ile) + AMP + diphosphate</text>
        <dbReference type="Rhea" id="RHEA:11060"/>
        <dbReference type="Rhea" id="RHEA-COMP:9666"/>
        <dbReference type="Rhea" id="RHEA-COMP:9695"/>
        <dbReference type="ChEBI" id="CHEBI:30616"/>
        <dbReference type="ChEBI" id="CHEBI:33019"/>
        <dbReference type="ChEBI" id="CHEBI:58045"/>
        <dbReference type="ChEBI" id="CHEBI:78442"/>
        <dbReference type="ChEBI" id="CHEBI:78528"/>
        <dbReference type="ChEBI" id="CHEBI:456215"/>
        <dbReference type="EC" id="6.1.1.5"/>
    </reaction>
</comment>
<comment type="cofactor">
    <cofactor evidence="1">
        <name>Zn(2+)</name>
        <dbReference type="ChEBI" id="CHEBI:29105"/>
    </cofactor>
    <text evidence="1">Binds 1 zinc ion per subunit.</text>
</comment>
<comment type="subunit">
    <text evidence="1">Monomer.</text>
</comment>
<comment type="subcellular location">
    <subcellularLocation>
        <location evidence="1">Cytoplasm</location>
    </subcellularLocation>
</comment>
<comment type="domain">
    <text evidence="1">IleRS has two distinct active sites: one for aminoacylation and one for editing. The misactivated valine is translocated from the active site to the editing site, which sterically excludes the correctly activated isoleucine. The single editing site contains two valyl binding pockets, one specific for each substrate (Val-AMP or Val-tRNA(Ile)).</text>
</comment>
<comment type="similarity">
    <text evidence="1">Belongs to the class-I aminoacyl-tRNA synthetase family. IleS type 1 subfamily.</text>
</comment>
<name>SYI_LACH4</name>